<proteinExistence type="inferred from homology"/>
<organism>
    <name type="scientific">Aquifex aeolicus (strain VF5)</name>
    <dbReference type="NCBI Taxonomy" id="224324"/>
    <lineage>
        <taxon>Bacteria</taxon>
        <taxon>Pseudomonadati</taxon>
        <taxon>Aquificota</taxon>
        <taxon>Aquificia</taxon>
        <taxon>Aquificales</taxon>
        <taxon>Aquificaceae</taxon>
        <taxon>Aquifex</taxon>
    </lineage>
</organism>
<evidence type="ECO:0000255" key="1">
    <source>
        <dbReference type="HAMAP-Rule" id="MF_00147"/>
    </source>
</evidence>
<feature type="chain" id="PRO_0000090173" description="Triosephosphate isomerase">
    <location>
        <begin position="1"/>
        <end position="247"/>
    </location>
</feature>
<feature type="active site" description="Electrophile" evidence="1">
    <location>
        <position position="94"/>
    </location>
</feature>
<feature type="active site" description="Proton acceptor" evidence="1">
    <location>
        <position position="165"/>
    </location>
</feature>
<feature type="binding site" evidence="1">
    <location>
        <begin position="8"/>
        <end position="10"/>
    </location>
    <ligand>
        <name>substrate</name>
    </ligand>
</feature>
<feature type="binding site" evidence="1">
    <location>
        <position position="171"/>
    </location>
    <ligand>
        <name>substrate</name>
    </ligand>
</feature>
<feature type="binding site" evidence="1">
    <location>
        <position position="210"/>
    </location>
    <ligand>
        <name>substrate</name>
    </ligand>
</feature>
<keyword id="KW-0963">Cytoplasm</keyword>
<keyword id="KW-0312">Gluconeogenesis</keyword>
<keyword id="KW-0324">Glycolysis</keyword>
<keyword id="KW-0413">Isomerase</keyword>
<keyword id="KW-1185">Reference proteome</keyword>
<comment type="function">
    <text evidence="1">Involved in the gluconeogenesis. Catalyzes stereospecifically the conversion of dihydroxyacetone phosphate (DHAP) to D-glyceraldehyde-3-phosphate (G3P).</text>
</comment>
<comment type="catalytic activity">
    <reaction evidence="1">
        <text>D-glyceraldehyde 3-phosphate = dihydroxyacetone phosphate</text>
        <dbReference type="Rhea" id="RHEA:18585"/>
        <dbReference type="ChEBI" id="CHEBI:57642"/>
        <dbReference type="ChEBI" id="CHEBI:59776"/>
        <dbReference type="EC" id="5.3.1.1"/>
    </reaction>
</comment>
<comment type="pathway">
    <text evidence="1">Carbohydrate biosynthesis; gluconeogenesis.</text>
</comment>
<comment type="pathway">
    <text evidence="1">Carbohydrate degradation; glycolysis; D-glyceraldehyde 3-phosphate from glycerone phosphate: step 1/1.</text>
</comment>
<comment type="subunit">
    <text evidence="1">Homodimer.</text>
</comment>
<comment type="subcellular location">
    <subcellularLocation>
        <location evidence="1">Cytoplasm</location>
    </subcellularLocation>
</comment>
<comment type="similarity">
    <text evidence="1">Belongs to the triosephosphate isomerase family.</text>
</comment>
<sequence length="247" mass="27765">MRRLIAANWKMNKTVKETEEYINTFLKFVEHPESREILICPPFTSLYVAGKMLQGTGVKLGAQNCHYEKRGAFTGEISIPMLQEVGCEYVIVGHSERRHIFGESDELIHKKIVACLEMGIRPILCVGEKKEEREAGMTFKVIETQIKLALTGVEEHTDKIDIAYEPVWAIGTGTPATPEDAVEVHTFIRNLINQLNPKNEGKTRILYGGSVNPQNAKEFMKHEEINGLLVGTASLDPESFAKIVYSF</sequence>
<name>TPIS_AQUAE</name>
<dbReference type="EC" id="5.3.1.1" evidence="1"/>
<dbReference type="EMBL" id="AE000657">
    <property type="protein sequence ID" value="AAC06639.1"/>
    <property type="molecule type" value="Genomic_DNA"/>
</dbReference>
<dbReference type="PIR" id="B70332">
    <property type="entry name" value="B70332"/>
</dbReference>
<dbReference type="RefSeq" id="NP_213246.1">
    <property type="nucleotide sequence ID" value="NC_000918.1"/>
</dbReference>
<dbReference type="RefSeq" id="WP_010880184.1">
    <property type="nucleotide sequence ID" value="NC_000918.1"/>
</dbReference>
<dbReference type="SMR" id="O66686"/>
<dbReference type="FunCoup" id="O66686">
    <property type="interactions" value="442"/>
</dbReference>
<dbReference type="STRING" id="224324.aq_360"/>
<dbReference type="EnsemblBacteria" id="AAC06639">
    <property type="protein sequence ID" value="AAC06639"/>
    <property type="gene ID" value="aq_360"/>
</dbReference>
<dbReference type="KEGG" id="aae:aq_360"/>
<dbReference type="PATRIC" id="fig|224324.8.peg.290"/>
<dbReference type="eggNOG" id="COG0149">
    <property type="taxonomic scope" value="Bacteria"/>
</dbReference>
<dbReference type="HOGENOM" id="CLU_024251_2_3_0"/>
<dbReference type="InParanoid" id="O66686"/>
<dbReference type="OrthoDB" id="9809429at2"/>
<dbReference type="UniPathway" id="UPA00109">
    <property type="reaction ID" value="UER00189"/>
</dbReference>
<dbReference type="UniPathway" id="UPA00138"/>
<dbReference type="Proteomes" id="UP000000798">
    <property type="component" value="Chromosome"/>
</dbReference>
<dbReference type="GO" id="GO:0005829">
    <property type="term" value="C:cytosol"/>
    <property type="evidence" value="ECO:0000318"/>
    <property type="project" value="GO_Central"/>
</dbReference>
<dbReference type="GO" id="GO:0004807">
    <property type="term" value="F:triose-phosphate isomerase activity"/>
    <property type="evidence" value="ECO:0000318"/>
    <property type="project" value="GO_Central"/>
</dbReference>
<dbReference type="GO" id="GO:0006094">
    <property type="term" value="P:gluconeogenesis"/>
    <property type="evidence" value="ECO:0000318"/>
    <property type="project" value="GO_Central"/>
</dbReference>
<dbReference type="GO" id="GO:0046166">
    <property type="term" value="P:glyceraldehyde-3-phosphate biosynthetic process"/>
    <property type="evidence" value="ECO:0000318"/>
    <property type="project" value="GO_Central"/>
</dbReference>
<dbReference type="GO" id="GO:0019563">
    <property type="term" value="P:glycerol catabolic process"/>
    <property type="evidence" value="ECO:0000318"/>
    <property type="project" value="GO_Central"/>
</dbReference>
<dbReference type="GO" id="GO:0006096">
    <property type="term" value="P:glycolytic process"/>
    <property type="evidence" value="ECO:0000318"/>
    <property type="project" value="GO_Central"/>
</dbReference>
<dbReference type="CDD" id="cd00311">
    <property type="entry name" value="TIM"/>
    <property type="match status" value="1"/>
</dbReference>
<dbReference type="FunFam" id="3.20.20.70:FF:000016">
    <property type="entry name" value="Triosephosphate isomerase"/>
    <property type="match status" value="1"/>
</dbReference>
<dbReference type="Gene3D" id="3.20.20.70">
    <property type="entry name" value="Aldolase class I"/>
    <property type="match status" value="1"/>
</dbReference>
<dbReference type="HAMAP" id="MF_00147_B">
    <property type="entry name" value="TIM_B"/>
    <property type="match status" value="1"/>
</dbReference>
<dbReference type="InterPro" id="IPR013785">
    <property type="entry name" value="Aldolase_TIM"/>
</dbReference>
<dbReference type="InterPro" id="IPR035990">
    <property type="entry name" value="TIM_sf"/>
</dbReference>
<dbReference type="InterPro" id="IPR022896">
    <property type="entry name" value="TrioseP_Isoase_bac/euk"/>
</dbReference>
<dbReference type="InterPro" id="IPR000652">
    <property type="entry name" value="Triosephosphate_isomerase"/>
</dbReference>
<dbReference type="InterPro" id="IPR020861">
    <property type="entry name" value="Triosephosphate_isomerase_AS"/>
</dbReference>
<dbReference type="NCBIfam" id="TIGR00419">
    <property type="entry name" value="tim"/>
    <property type="match status" value="1"/>
</dbReference>
<dbReference type="PANTHER" id="PTHR21139">
    <property type="entry name" value="TRIOSEPHOSPHATE ISOMERASE"/>
    <property type="match status" value="1"/>
</dbReference>
<dbReference type="PANTHER" id="PTHR21139:SF42">
    <property type="entry name" value="TRIOSEPHOSPHATE ISOMERASE"/>
    <property type="match status" value="1"/>
</dbReference>
<dbReference type="Pfam" id="PF00121">
    <property type="entry name" value="TIM"/>
    <property type="match status" value="1"/>
</dbReference>
<dbReference type="SUPFAM" id="SSF51351">
    <property type="entry name" value="Triosephosphate isomerase (TIM)"/>
    <property type="match status" value="1"/>
</dbReference>
<dbReference type="PROSITE" id="PS00171">
    <property type="entry name" value="TIM_1"/>
    <property type="match status" value="1"/>
</dbReference>
<dbReference type="PROSITE" id="PS51440">
    <property type="entry name" value="TIM_2"/>
    <property type="match status" value="1"/>
</dbReference>
<gene>
    <name evidence="1" type="primary">tpiA</name>
    <name type="synonym">timA</name>
    <name type="ordered locus">aq_360</name>
</gene>
<reference key="1">
    <citation type="journal article" date="1998" name="Nature">
        <title>The complete genome of the hyperthermophilic bacterium Aquifex aeolicus.</title>
        <authorList>
            <person name="Deckert G."/>
            <person name="Warren P.V."/>
            <person name="Gaasterland T."/>
            <person name="Young W.G."/>
            <person name="Lenox A.L."/>
            <person name="Graham D.E."/>
            <person name="Overbeek R."/>
            <person name="Snead M.A."/>
            <person name="Keller M."/>
            <person name="Aujay M."/>
            <person name="Huber R."/>
            <person name="Feldman R.A."/>
            <person name="Short J.M."/>
            <person name="Olsen G.J."/>
            <person name="Swanson R.V."/>
        </authorList>
    </citation>
    <scope>NUCLEOTIDE SEQUENCE [LARGE SCALE GENOMIC DNA]</scope>
    <source>
        <strain>VF5</strain>
    </source>
</reference>
<accession>O66686</accession>
<protein>
    <recommendedName>
        <fullName evidence="1">Triosephosphate isomerase</fullName>
        <shortName evidence="1">TIM</shortName>
        <shortName evidence="1">TPI</shortName>
        <ecNumber evidence="1">5.3.1.1</ecNumber>
    </recommendedName>
    <alternativeName>
        <fullName evidence="1">Triose-phosphate isomerase</fullName>
    </alternativeName>
</protein>